<proteinExistence type="inferred from homology"/>
<name>RL30_MYCMM</name>
<dbReference type="EMBL" id="CP000854">
    <property type="protein sequence ID" value="ACC39511.1"/>
    <property type="molecule type" value="Genomic_DNA"/>
</dbReference>
<dbReference type="RefSeq" id="WP_011739077.1">
    <property type="nucleotide sequence ID" value="NC_010612.1"/>
</dbReference>
<dbReference type="SMR" id="B2HCT9"/>
<dbReference type="STRING" id="216594.MMAR_1053"/>
<dbReference type="GeneID" id="34342253"/>
<dbReference type="KEGG" id="mmi:MMAR_1053"/>
<dbReference type="eggNOG" id="COG1841">
    <property type="taxonomic scope" value="Bacteria"/>
</dbReference>
<dbReference type="HOGENOM" id="CLU_131047_2_0_11"/>
<dbReference type="OrthoDB" id="9812790at2"/>
<dbReference type="Proteomes" id="UP000001190">
    <property type="component" value="Chromosome"/>
</dbReference>
<dbReference type="GO" id="GO:0022625">
    <property type="term" value="C:cytosolic large ribosomal subunit"/>
    <property type="evidence" value="ECO:0007669"/>
    <property type="project" value="TreeGrafter"/>
</dbReference>
<dbReference type="GO" id="GO:0003735">
    <property type="term" value="F:structural constituent of ribosome"/>
    <property type="evidence" value="ECO:0007669"/>
    <property type="project" value="InterPro"/>
</dbReference>
<dbReference type="GO" id="GO:0006412">
    <property type="term" value="P:translation"/>
    <property type="evidence" value="ECO:0007669"/>
    <property type="project" value="UniProtKB-UniRule"/>
</dbReference>
<dbReference type="CDD" id="cd01658">
    <property type="entry name" value="Ribosomal_L30"/>
    <property type="match status" value="1"/>
</dbReference>
<dbReference type="FunFam" id="3.30.1390.20:FF:000001">
    <property type="entry name" value="50S ribosomal protein L30"/>
    <property type="match status" value="1"/>
</dbReference>
<dbReference type="Gene3D" id="3.30.1390.20">
    <property type="entry name" value="Ribosomal protein L30, ferredoxin-like fold domain"/>
    <property type="match status" value="1"/>
</dbReference>
<dbReference type="HAMAP" id="MF_01371_B">
    <property type="entry name" value="Ribosomal_uL30_B"/>
    <property type="match status" value="1"/>
</dbReference>
<dbReference type="InterPro" id="IPR036919">
    <property type="entry name" value="Ribo_uL30_ferredoxin-like_sf"/>
</dbReference>
<dbReference type="InterPro" id="IPR005996">
    <property type="entry name" value="Ribosomal_uL30_bac-type"/>
</dbReference>
<dbReference type="InterPro" id="IPR018038">
    <property type="entry name" value="Ribosomal_uL30_CS"/>
</dbReference>
<dbReference type="InterPro" id="IPR016082">
    <property type="entry name" value="Ribosomal_uL30_ferredoxin-like"/>
</dbReference>
<dbReference type="NCBIfam" id="TIGR01308">
    <property type="entry name" value="rpmD_bact"/>
    <property type="match status" value="1"/>
</dbReference>
<dbReference type="PANTHER" id="PTHR15892:SF2">
    <property type="entry name" value="LARGE RIBOSOMAL SUBUNIT PROTEIN UL30M"/>
    <property type="match status" value="1"/>
</dbReference>
<dbReference type="PANTHER" id="PTHR15892">
    <property type="entry name" value="MITOCHONDRIAL RIBOSOMAL PROTEIN L30"/>
    <property type="match status" value="1"/>
</dbReference>
<dbReference type="Pfam" id="PF00327">
    <property type="entry name" value="Ribosomal_L30"/>
    <property type="match status" value="1"/>
</dbReference>
<dbReference type="PIRSF" id="PIRSF002211">
    <property type="entry name" value="Ribosomal_L30_bac-type"/>
    <property type="match status" value="1"/>
</dbReference>
<dbReference type="SUPFAM" id="SSF55129">
    <property type="entry name" value="Ribosomal protein L30p/L7e"/>
    <property type="match status" value="1"/>
</dbReference>
<dbReference type="PROSITE" id="PS00634">
    <property type="entry name" value="RIBOSOMAL_L30"/>
    <property type="match status" value="1"/>
</dbReference>
<accession>B2HCT9</accession>
<evidence type="ECO:0000255" key="1">
    <source>
        <dbReference type="HAMAP-Rule" id="MF_01371"/>
    </source>
</evidence>
<evidence type="ECO:0000305" key="2"/>
<feature type="chain" id="PRO_0000347120" description="Large ribosomal subunit protein uL30">
    <location>
        <begin position="1"/>
        <end position="72"/>
    </location>
</feature>
<reference key="1">
    <citation type="journal article" date="2008" name="Genome Res.">
        <title>Insights from the complete genome sequence of Mycobacterium marinum on the evolution of Mycobacterium tuberculosis.</title>
        <authorList>
            <person name="Stinear T.P."/>
            <person name="Seemann T."/>
            <person name="Harrison P.F."/>
            <person name="Jenkin G.A."/>
            <person name="Davies J.K."/>
            <person name="Johnson P.D."/>
            <person name="Abdellah Z."/>
            <person name="Arrowsmith C."/>
            <person name="Chillingworth T."/>
            <person name="Churcher C."/>
            <person name="Clarke K."/>
            <person name="Cronin A."/>
            <person name="Davis P."/>
            <person name="Goodhead I."/>
            <person name="Holroyd N."/>
            <person name="Jagels K."/>
            <person name="Lord A."/>
            <person name="Moule S."/>
            <person name="Mungall K."/>
            <person name="Norbertczak H."/>
            <person name="Quail M.A."/>
            <person name="Rabbinowitsch E."/>
            <person name="Walker D."/>
            <person name="White B."/>
            <person name="Whitehead S."/>
            <person name="Small P.L."/>
            <person name="Brosch R."/>
            <person name="Ramakrishnan L."/>
            <person name="Fischbach M.A."/>
            <person name="Parkhill J."/>
            <person name="Cole S.T."/>
        </authorList>
    </citation>
    <scope>NUCLEOTIDE SEQUENCE [LARGE SCALE GENOMIC DNA]</scope>
    <source>
        <strain>ATCC BAA-535 / M</strain>
    </source>
</reference>
<keyword id="KW-1185">Reference proteome</keyword>
<keyword id="KW-0687">Ribonucleoprotein</keyword>
<keyword id="KW-0689">Ribosomal protein</keyword>
<protein>
    <recommendedName>
        <fullName evidence="1">Large ribosomal subunit protein uL30</fullName>
    </recommendedName>
    <alternativeName>
        <fullName evidence="2">50S ribosomal protein L30</fullName>
    </alternativeName>
</protein>
<comment type="subunit">
    <text evidence="1">Part of the 50S ribosomal subunit.</text>
</comment>
<comment type="similarity">
    <text evidence="1">Belongs to the universal ribosomal protein uL30 family.</text>
</comment>
<organism>
    <name type="scientific">Mycobacterium marinum (strain ATCC BAA-535 / M)</name>
    <dbReference type="NCBI Taxonomy" id="216594"/>
    <lineage>
        <taxon>Bacteria</taxon>
        <taxon>Bacillati</taxon>
        <taxon>Actinomycetota</taxon>
        <taxon>Actinomycetes</taxon>
        <taxon>Mycobacteriales</taxon>
        <taxon>Mycobacteriaceae</taxon>
        <taxon>Mycobacterium</taxon>
        <taxon>Mycobacterium ulcerans group</taxon>
    </lineage>
</organism>
<gene>
    <name evidence="1" type="primary">rpmD</name>
    <name type="ordered locus">MMAR_1053</name>
</gene>
<sequence length="72" mass="8074">MSEATNQLKITQVRSTIGARWKQRESLRTLGLRRIRHTVVRDDNAQTRGLIAVVRHLVEVEPAQNGTGGKAQ</sequence>